<protein>
    <recommendedName>
        <fullName evidence="1">Replication restart protein PriB</fullName>
    </recommendedName>
</protein>
<accession>A9LZQ2</accession>
<evidence type="ECO:0000255" key="1">
    <source>
        <dbReference type="HAMAP-Rule" id="MF_00720"/>
    </source>
</evidence>
<name>PRIB_NEIM0</name>
<gene>
    <name evidence="1" type="primary">priB</name>
    <name type="ordered locus">NMCC_1237</name>
</gene>
<reference key="1">
    <citation type="journal article" date="2008" name="Genomics">
        <title>Characterization of ST-4821 complex, a unique Neisseria meningitidis clone.</title>
        <authorList>
            <person name="Peng J."/>
            <person name="Yang L."/>
            <person name="Yang F."/>
            <person name="Yang J."/>
            <person name="Yan Y."/>
            <person name="Nie H."/>
            <person name="Zhang X."/>
            <person name="Xiong Z."/>
            <person name="Jiang Y."/>
            <person name="Cheng F."/>
            <person name="Xu X."/>
            <person name="Chen S."/>
            <person name="Sun L."/>
            <person name="Li W."/>
            <person name="Shen Y."/>
            <person name="Shao Z."/>
            <person name="Liang X."/>
            <person name="Xu J."/>
            <person name="Jin Q."/>
        </authorList>
    </citation>
    <scope>NUCLEOTIDE SEQUENCE [LARGE SCALE GENOMIC DNA]</scope>
    <source>
        <strain>053442</strain>
    </source>
</reference>
<organism>
    <name type="scientific">Neisseria meningitidis serogroup C (strain 053442)</name>
    <dbReference type="NCBI Taxonomy" id="374833"/>
    <lineage>
        <taxon>Bacteria</taxon>
        <taxon>Pseudomonadati</taxon>
        <taxon>Pseudomonadota</taxon>
        <taxon>Betaproteobacteria</taxon>
        <taxon>Neisseriales</taxon>
        <taxon>Neisseriaceae</taxon>
        <taxon>Neisseria</taxon>
    </lineage>
</organism>
<comment type="function">
    <text evidence="1">Involved in the restart of stalled replication forks, which reloads the replicative helicase on sites other than the origin of replication; the PriA-PriB pathway is the major replication restart pathway. During primosome assembly it facilitates complex formation between PriA and DnaT on DNA; stabilizes PriA on DNA. Stimulates the DNA unwinding activity of PriA helicase.</text>
</comment>
<comment type="subunit">
    <text evidence="1">Homodimer. Interacts with PriA and DnaT. Component of the replication restart primosome. Primosome assembly occurs via a 'hand-off' mechanism. PriA binds to replication forks, subsequently PriB then DnaT bind; DnaT then displaces ssDNA to generate the helicase loading substrate.</text>
</comment>
<comment type="similarity">
    <text evidence="1">Belongs to the PriB family.</text>
</comment>
<keyword id="KW-0235">DNA replication</keyword>
<keyword id="KW-0238">DNA-binding</keyword>
<keyword id="KW-0639">Primosome</keyword>
<dbReference type="EMBL" id="CP000381">
    <property type="protein sequence ID" value="ABX73410.1"/>
    <property type="molecule type" value="Genomic_DNA"/>
</dbReference>
<dbReference type="RefSeq" id="WP_012221739.1">
    <property type="nucleotide sequence ID" value="NC_010120.1"/>
</dbReference>
<dbReference type="SMR" id="A9LZQ2"/>
<dbReference type="KEGG" id="nmn:NMCC_1237"/>
<dbReference type="HOGENOM" id="CLU_166075_1_2_4"/>
<dbReference type="Proteomes" id="UP000001177">
    <property type="component" value="Chromosome"/>
</dbReference>
<dbReference type="GO" id="GO:1990077">
    <property type="term" value="C:primosome complex"/>
    <property type="evidence" value="ECO:0007669"/>
    <property type="project" value="UniProtKB-KW"/>
</dbReference>
<dbReference type="GO" id="GO:0003697">
    <property type="term" value="F:single-stranded DNA binding"/>
    <property type="evidence" value="ECO:0007669"/>
    <property type="project" value="UniProtKB-UniRule"/>
</dbReference>
<dbReference type="GO" id="GO:0006269">
    <property type="term" value="P:DNA replication, synthesis of primer"/>
    <property type="evidence" value="ECO:0007669"/>
    <property type="project" value="UniProtKB-KW"/>
</dbReference>
<dbReference type="FunFam" id="2.40.50.140:FF:000357">
    <property type="entry name" value="Primosomal replication protein N"/>
    <property type="match status" value="1"/>
</dbReference>
<dbReference type="Gene3D" id="2.40.50.140">
    <property type="entry name" value="Nucleic acid-binding proteins"/>
    <property type="match status" value="1"/>
</dbReference>
<dbReference type="HAMAP" id="MF_00720">
    <property type="entry name" value="PriB"/>
    <property type="match status" value="1"/>
</dbReference>
<dbReference type="InterPro" id="IPR012340">
    <property type="entry name" value="NA-bd_OB-fold"/>
</dbReference>
<dbReference type="InterPro" id="IPR000424">
    <property type="entry name" value="Primosome_PriB/ssb"/>
</dbReference>
<dbReference type="InterPro" id="IPR023646">
    <property type="entry name" value="Prisomal_replication_PriB"/>
</dbReference>
<dbReference type="NCBIfam" id="TIGR04418">
    <property type="entry name" value="PriB_gamma"/>
    <property type="match status" value="1"/>
</dbReference>
<dbReference type="Pfam" id="PF22657">
    <property type="entry name" value="SSB_1"/>
    <property type="match status" value="1"/>
</dbReference>
<dbReference type="PIRSF" id="PIRSF003135">
    <property type="entry name" value="Primosomal_n"/>
    <property type="match status" value="1"/>
</dbReference>
<dbReference type="SUPFAM" id="SSF50249">
    <property type="entry name" value="Nucleic acid-binding proteins"/>
    <property type="match status" value="1"/>
</dbReference>
<dbReference type="PROSITE" id="PS50935">
    <property type="entry name" value="SSB"/>
    <property type="match status" value="1"/>
</dbReference>
<proteinExistence type="inferred from homology"/>
<sequence length="100" mass="11618">MGFNNLVSLAALIEKVFPIRYTPAGISVLDIILKHESWQKENGQQCFVQLEIPARILGRQAEEWQYRQGVYVHVEGFLAQKSRRSLMPMLRIQNIKEYKG</sequence>
<feature type="chain" id="PRO_1000083285" description="Replication restart protein PriB">
    <location>
        <begin position="1"/>
        <end position="100"/>
    </location>
</feature>
<feature type="domain" description="SSB" evidence="1">
    <location>
        <begin position="1"/>
        <end position="99"/>
    </location>
</feature>